<sequence>MENERVEREQSQFQEDEFIDSRKPPPWRKQITVRAIVASLLIGIVYSVICLKLNLTTGLVPNLNISSALLAFVFLKSWTKVLQKAGIATTPFTRQENTIAQTCAVACYSISLAGGFASYLLGLNRRTYEETGVNTEGNNPRGIKEPGVGWMTSFLFVTSFIGLVVLVPLRKVMIIDYKLTYPSGTATAVLINGFHTSKGDKTAKKQIRGFIKSFGLSFFWAFFGWFYSGGEKCGFSQFPTFGLQALDKTFYFDFSMTYVGAGMICSHLVNLSLLFGAILSWGIMWPLIARLKGEWFPATLKDNSMQGLNGYKVFICIALILGDGLYNFVKILFFTGRSFHSRLSKTNSISTLVEVPEDSTKESDNLKRENEVFVRESIPLWMACVGYLFFSLVSIIAIPLMFPQLKWYFVLVAYLLAPSLSFCNAYGAGLTDMNMAYNYGKAALFVMAALAGKNDGVVAGMVACGLIKSIVSVSADLMHDFKTGHLTQTSPRSMLVAQAIGTAIGCVVAPLTFFLFYKAFDVGNQNGEYKAPYAMIYRNMAIIGVQGPSALPKHCLELCYGFFAFAVAANLARDLLPDKPGKWIPLPMAMAVPFLVGGSFAIDMCIGSLVVYVWKKVNRKKADVMVPAVASGLICGDGLWILPSSLLALAKVRPPICMNFTAAH</sequence>
<proteinExistence type="evidence at protein level"/>
<comment type="function">
    <text evidence="2">May be involved in the lateral transport of nicotianamine-chelated metals in the vasculature.</text>
</comment>
<comment type="subcellular location">
    <subcellularLocation>
        <location evidence="2">Cell membrane</location>
        <topology evidence="2">Multi-pass membrane protein</topology>
    </subcellularLocation>
    <text>Found almost exclusively on the lateral plasma membranes.</text>
</comment>
<comment type="tissue specificity">
    <text evidence="2 3">Expressed in roots, leaves and weakly in shoots. Restricted to the veins, to the central cylinder of the young roots and to the pericycle and the endodermis cells facing the meta-xylem tubes in older roots. Expressed in the vasculature of sepals, petals, anthers, stigma and siliques, but not in developing seeds or in meristematic zones.</text>
</comment>
<comment type="induction">
    <text evidence="3">Inhibition upon iron and zinc deficiency. Not regulated by copper. Subjected to diurnal regulation.</text>
</comment>
<comment type="disruption phenotype">
    <text evidence="2">No visible phenotype.</text>
</comment>
<comment type="similarity">
    <text evidence="4">Belongs to the YSL (TC 2.A.67.2) family.</text>
</comment>
<comment type="sequence caution" evidence="4">
    <conflict type="erroneous initiation">
        <sequence resource="EMBL-CDS" id="AAM98073"/>
    </conflict>
    <text>Truncated N-terminus.</text>
</comment>
<comment type="sequence caution" evidence="4">
    <conflict type="erroneous gene model prediction">
        <sequence resource="EMBL-CDS" id="BAB11231"/>
    </conflict>
</comment>
<feature type="chain" id="PRO_0000311413" description="Metal-nicotianamine transporter YSL2">
    <location>
        <begin position="1"/>
        <end position="664"/>
    </location>
</feature>
<feature type="transmembrane region" description="Helical" evidence="1">
    <location>
        <begin position="31"/>
        <end position="51"/>
    </location>
</feature>
<feature type="transmembrane region" description="Helical" evidence="1">
    <location>
        <begin position="55"/>
        <end position="75"/>
    </location>
</feature>
<feature type="transmembrane region" description="Helical" evidence="1">
    <location>
        <begin position="103"/>
        <end position="123"/>
    </location>
</feature>
<feature type="transmembrane region" description="Helical" evidence="1">
    <location>
        <begin position="147"/>
        <end position="167"/>
    </location>
</feature>
<feature type="transmembrane region" description="Helical" evidence="1">
    <location>
        <begin position="209"/>
        <end position="229"/>
    </location>
</feature>
<feature type="transmembrane region" description="Helical" evidence="1">
    <location>
        <begin position="268"/>
        <end position="288"/>
    </location>
</feature>
<feature type="transmembrane region" description="Helical" evidence="1">
    <location>
        <begin position="314"/>
        <end position="334"/>
    </location>
</feature>
<feature type="transmembrane region" description="Helical" evidence="1">
    <location>
        <begin position="378"/>
        <end position="398"/>
    </location>
</feature>
<feature type="transmembrane region" description="Helical" evidence="1">
    <location>
        <begin position="409"/>
        <end position="429"/>
    </location>
</feature>
<feature type="transmembrane region" description="Helical" evidence="1">
    <location>
        <begin position="457"/>
        <end position="477"/>
    </location>
</feature>
<feature type="transmembrane region" description="Helical" evidence="1">
    <location>
        <begin position="496"/>
        <end position="516"/>
    </location>
</feature>
<feature type="transmembrane region" description="Helical" evidence="1">
    <location>
        <begin position="549"/>
        <end position="569"/>
    </location>
</feature>
<feature type="transmembrane region" description="Helical" evidence="1">
    <location>
        <begin position="594"/>
        <end position="614"/>
    </location>
</feature>
<feature type="transmembrane region" description="Helical" evidence="1">
    <location>
        <begin position="629"/>
        <end position="649"/>
    </location>
</feature>
<protein>
    <recommendedName>
        <fullName>Metal-nicotianamine transporter YSL2</fullName>
    </recommendedName>
    <alternativeName>
        <fullName>Protein YELLOW STRIPE LIKE 2</fullName>
        <shortName>AtYSL2</shortName>
    </alternativeName>
</protein>
<name>YSL2_ARATH</name>
<dbReference type="EMBL" id="AY515561">
    <property type="protein sequence ID" value="AAS00692.1"/>
    <property type="molecule type" value="mRNA"/>
</dbReference>
<dbReference type="EMBL" id="AY648977">
    <property type="protein sequence ID" value="AAT69741.1"/>
    <property type="molecule type" value="mRNA"/>
</dbReference>
<dbReference type="EMBL" id="AB016884">
    <property type="protein sequence ID" value="BAB11231.1"/>
    <property type="status" value="ALT_SEQ"/>
    <property type="molecule type" value="Genomic_DNA"/>
</dbReference>
<dbReference type="EMBL" id="CP002688">
    <property type="protein sequence ID" value="AED93305.1"/>
    <property type="molecule type" value="Genomic_DNA"/>
</dbReference>
<dbReference type="EMBL" id="AK227212">
    <property type="protein sequence ID" value="BAE99250.1"/>
    <property type="molecule type" value="mRNA"/>
</dbReference>
<dbReference type="EMBL" id="AY139751">
    <property type="protein sequence ID" value="AAM98073.1"/>
    <property type="status" value="ALT_INIT"/>
    <property type="molecule type" value="mRNA"/>
</dbReference>
<dbReference type="EMBL" id="BT005806">
    <property type="protein sequence ID" value="AAO64741.1"/>
    <property type="molecule type" value="mRNA"/>
</dbReference>
<dbReference type="RefSeq" id="NP_197826.2">
    <property type="nucleotide sequence ID" value="NM_122346.3"/>
</dbReference>
<dbReference type="SMR" id="Q6R3K9"/>
<dbReference type="FunCoup" id="Q6R3K9">
    <property type="interactions" value="51"/>
</dbReference>
<dbReference type="STRING" id="3702.Q6R3K9"/>
<dbReference type="TCDB" id="2.A.67.2.3">
    <property type="family name" value="the oligopeptide transporter (opt) family"/>
</dbReference>
<dbReference type="iPTMnet" id="Q6R3K9"/>
<dbReference type="PaxDb" id="3702-AT5G24380.1"/>
<dbReference type="ProteomicsDB" id="242920"/>
<dbReference type="EnsemblPlants" id="AT5G24380.1">
    <property type="protein sequence ID" value="AT5G24380.1"/>
    <property type="gene ID" value="AT5G24380"/>
</dbReference>
<dbReference type="GeneID" id="832509"/>
<dbReference type="Gramene" id="AT5G24380.1">
    <property type="protein sequence ID" value="AT5G24380.1"/>
    <property type="gene ID" value="AT5G24380"/>
</dbReference>
<dbReference type="KEGG" id="ath:AT5G24380"/>
<dbReference type="Araport" id="AT5G24380"/>
<dbReference type="TAIR" id="AT5G24380">
    <property type="gene designation" value="YSL2"/>
</dbReference>
<dbReference type="eggNOG" id="ENOG502QQ2H">
    <property type="taxonomic scope" value="Eukaryota"/>
</dbReference>
<dbReference type="HOGENOM" id="CLU_015477_2_0_1"/>
<dbReference type="InParanoid" id="Q6R3K9"/>
<dbReference type="OMA" id="ICMNFTA"/>
<dbReference type="PhylomeDB" id="Q6R3K9"/>
<dbReference type="PRO" id="PR:Q6R3K9"/>
<dbReference type="Proteomes" id="UP000006548">
    <property type="component" value="Chromosome 5"/>
</dbReference>
<dbReference type="ExpressionAtlas" id="Q6R3K9">
    <property type="expression patterns" value="baseline and differential"/>
</dbReference>
<dbReference type="GO" id="GO:0005886">
    <property type="term" value="C:plasma membrane"/>
    <property type="evidence" value="ECO:0007005"/>
    <property type="project" value="TAIR"/>
</dbReference>
<dbReference type="GO" id="GO:0035673">
    <property type="term" value="F:oligopeptide transmembrane transporter activity"/>
    <property type="evidence" value="ECO:0007669"/>
    <property type="project" value="InterPro"/>
</dbReference>
<dbReference type="GO" id="GO:0006811">
    <property type="term" value="P:monoatomic ion transport"/>
    <property type="evidence" value="ECO:0007669"/>
    <property type="project" value="UniProtKB-KW"/>
</dbReference>
<dbReference type="GO" id="GO:0010039">
    <property type="term" value="P:response to iron ion"/>
    <property type="evidence" value="ECO:0000270"/>
    <property type="project" value="TAIR"/>
</dbReference>
<dbReference type="GO" id="GO:0010043">
    <property type="term" value="P:response to zinc ion"/>
    <property type="evidence" value="ECO:0000270"/>
    <property type="project" value="TAIR"/>
</dbReference>
<dbReference type="InterPro" id="IPR004813">
    <property type="entry name" value="OPT"/>
</dbReference>
<dbReference type="InterPro" id="IPR045035">
    <property type="entry name" value="YSL-like"/>
</dbReference>
<dbReference type="NCBIfam" id="TIGR00728">
    <property type="entry name" value="OPT_sfam"/>
    <property type="match status" value="1"/>
</dbReference>
<dbReference type="PANTHER" id="PTHR31645:SF44">
    <property type="entry name" value="METAL-NICOTIANAMINE TRANSPORTER YSL2"/>
    <property type="match status" value="1"/>
</dbReference>
<dbReference type="PANTHER" id="PTHR31645">
    <property type="entry name" value="OLIGOPEPTIDE TRANSPORTER YGL114W-RELATED"/>
    <property type="match status" value="1"/>
</dbReference>
<dbReference type="Pfam" id="PF03169">
    <property type="entry name" value="OPT"/>
    <property type="match status" value="1"/>
</dbReference>
<accession>Q6R3K9</accession>
<accession>Q0WUE8</accession>
<accession>Q8L750</accession>
<accession>Q9FIN4</accession>
<evidence type="ECO:0000255" key="1"/>
<evidence type="ECO:0000269" key="2">
    <source>
    </source>
</evidence>
<evidence type="ECO:0000269" key="3">
    <source>
    </source>
</evidence>
<evidence type="ECO:0000305" key="4"/>
<gene>
    <name type="primary">YSL2</name>
    <name type="ordered locus">At5g24380</name>
    <name type="ORF">K16H17.9</name>
</gene>
<organism>
    <name type="scientific">Arabidopsis thaliana</name>
    <name type="common">Mouse-ear cress</name>
    <dbReference type="NCBI Taxonomy" id="3702"/>
    <lineage>
        <taxon>Eukaryota</taxon>
        <taxon>Viridiplantae</taxon>
        <taxon>Streptophyta</taxon>
        <taxon>Embryophyta</taxon>
        <taxon>Tracheophyta</taxon>
        <taxon>Spermatophyta</taxon>
        <taxon>Magnoliopsida</taxon>
        <taxon>eudicotyledons</taxon>
        <taxon>Gunneridae</taxon>
        <taxon>Pentapetalae</taxon>
        <taxon>rosids</taxon>
        <taxon>malvids</taxon>
        <taxon>Brassicales</taxon>
        <taxon>Brassicaceae</taxon>
        <taxon>Camelineae</taxon>
        <taxon>Arabidopsis</taxon>
    </lineage>
</organism>
<keyword id="KW-1003">Cell membrane</keyword>
<keyword id="KW-0406">Ion transport</keyword>
<keyword id="KW-0408">Iron</keyword>
<keyword id="KW-0410">Iron transport</keyword>
<keyword id="KW-0472">Membrane</keyword>
<keyword id="KW-1185">Reference proteome</keyword>
<keyword id="KW-0812">Transmembrane</keyword>
<keyword id="KW-1133">Transmembrane helix</keyword>
<keyword id="KW-0813">Transport</keyword>
<reference key="1">
    <citation type="submission" date="2003-12" db="EMBL/GenBank/DDBJ databases">
        <title>The yellow stripe-like (YSL) family of metal-nicotianamine transporters.</title>
        <authorList>
            <person name="Roberts L.A."/>
            <person name="Walker E.L."/>
        </authorList>
    </citation>
    <scope>NUCLEOTIDE SEQUENCE [MRNA]</scope>
</reference>
<reference key="2">
    <citation type="journal article" date="2005" name="Plant Cell Physiol.">
        <title>A putative function for the arabidopsis Fe-Phytosiderophore transporter homolog AtYSL2 in Fe and Zn homeostasis.</title>
        <authorList>
            <person name="Schaaf G."/>
            <person name="Schikora A."/>
            <person name="Haeberle J."/>
            <person name="Vert G."/>
            <person name="Ludewig U."/>
            <person name="Briat J.-F."/>
            <person name="Curie C."/>
            <person name="von Wiren N."/>
        </authorList>
    </citation>
    <scope>NUCLEOTIDE SEQUENCE [MRNA]</scope>
    <scope>TISSUE SPECIFICITY</scope>
    <scope>INDUCTION</scope>
    <source>
        <strain>cv. Columbia</strain>
    </source>
</reference>
<reference key="3">
    <citation type="journal article" date="1998" name="DNA Res.">
        <title>Structural analysis of Arabidopsis thaliana chromosome 5. VIII. Sequence features of the regions of 1,081,958 bp covered by seventeen physically assigned P1 and TAC clones.</title>
        <authorList>
            <person name="Asamizu E."/>
            <person name="Sato S."/>
            <person name="Kaneko T."/>
            <person name="Nakamura Y."/>
            <person name="Kotani H."/>
            <person name="Miyajima N."/>
            <person name="Tabata S."/>
        </authorList>
    </citation>
    <scope>NUCLEOTIDE SEQUENCE [LARGE SCALE GENOMIC DNA]</scope>
    <source>
        <strain>cv. Columbia</strain>
    </source>
</reference>
<reference key="4">
    <citation type="journal article" date="2017" name="Plant J.">
        <title>Araport11: a complete reannotation of the Arabidopsis thaliana reference genome.</title>
        <authorList>
            <person name="Cheng C.Y."/>
            <person name="Krishnakumar V."/>
            <person name="Chan A.P."/>
            <person name="Thibaud-Nissen F."/>
            <person name="Schobel S."/>
            <person name="Town C.D."/>
        </authorList>
    </citation>
    <scope>GENOME REANNOTATION</scope>
    <source>
        <strain>cv. Columbia</strain>
    </source>
</reference>
<reference key="5">
    <citation type="submission" date="2006-07" db="EMBL/GenBank/DDBJ databases">
        <title>Large-scale analysis of RIKEN Arabidopsis full-length (RAFL) cDNAs.</title>
        <authorList>
            <person name="Totoki Y."/>
            <person name="Seki M."/>
            <person name="Ishida J."/>
            <person name="Nakajima M."/>
            <person name="Enju A."/>
            <person name="Kamiya A."/>
            <person name="Narusaka M."/>
            <person name="Shin-i T."/>
            <person name="Nakagawa M."/>
            <person name="Sakamoto N."/>
            <person name="Oishi K."/>
            <person name="Kohara Y."/>
            <person name="Kobayashi M."/>
            <person name="Toyoda A."/>
            <person name="Sakaki Y."/>
            <person name="Sakurai T."/>
            <person name="Iida K."/>
            <person name="Akiyama K."/>
            <person name="Satou M."/>
            <person name="Toyoda T."/>
            <person name="Konagaya A."/>
            <person name="Carninci P."/>
            <person name="Kawai J."/>
            <person name="Hayashizaki Y."/>
            <person name="Shinozaki K."/>
        </authorList>
    </citation>
    <scope>NUCLEOTIDE SEQUENCE [LARGE SCALE MRNA] OF 174-664</scope>
    <source>
        <strain>cv. Columbia</strain>
    </source>
</reference>
<reference key="6">
    <citation type="journal article" date="2003" name="Science">
        <title>Empirical analysis of transcriptional activity in the Arabidopsis genome.</title>
        <authorList>
            <person name="Yamada K."/>
            <person name="Lim J."/>
            <person name="Dale J.M."/>
            <person name="Chen H."/>
            <person name="Shinn P."/>
            <person name="Palm C.J."/>
            <person name="Southwick A.M."/>
            <person name="Wu H.C."/>
            <person name="Kim C.J."/>
            <person name="Nguyen M."/>
            <person name="Pham P.K."/>
            <person name="Cheuk R.F."/>
            <person name="Karlin-Newmann G."/>
            <person name="Liu S.X."/>
            <person name="Lam B."/>
            <person name="Sakano H."/>
            <person name="Wu T."/>
            <person name="Yu G."/>
            <person name="Miranda M."/>
            <person name="Quach H.L."/>
            <person name="Tripp M."/>
            <person name="Chang C.H."/>
            <person name="Lee J.M."/>
            <person name="Toriumi M.J."/>
            <person name="Chan M.M."/>
            <person name="Tang C.C."/>
            <person name="Onodera C.S."/>
            <person name="Deng J.M."/>
            <person name="Akiyama K."/>
            <person name="Ansari Y."/>
            <person name="Arakawa T."/>
            <person name="Banh J."/>
            <person name="Banno F."/>
            <person name="Bowser L."/>
            <person name="Brooks S.Y."/>
            <person name="Carninci P."/>
            <person name="Chao Q."/>
            <person name="Choy N."/>
            <person name="Enju A."/>
            <person name="Goldsmith A.D."/>
            <person name="Gurjal M."/>
            <person name="Hansen N.F."/>
            <person name="Hayashizaki Y."/>
            <person name="Johnson-Hopson C."/>
            <person name="Hsuan V.W."/>
            <person name="Iida K."/>
            <person name="Karnes M."/>
            <person name="Khan S."/>
            <person name="Koesema E."/>
            <person name="Ishida J."/>
            <person name="Jiang P.X."/>
            <person name="Jones T."/>
            <person name="Kawai J."/>
            <person name="Kamiya A."/>
            <person name="Meyers C."/>
            <person name="Nakajima M."/>
            <person name="Narusaka M."/>
            <person name="Seki M."/>
            <person name="Sakurai T."/>
            <person name="Satou M."/>
            <person name="Tamse R."/>
            <person name="Vaysberg M."/>
            <person name="Wallender E.K."/>
            <person name="Wong C."/>
            <person name="Yamamura Y."/>
            <person name="Yuan S."/>
            <person name="Shinozaki K."/>
            <person name="Davis R.W."/>
            <person name="Theologis A."/>
            <person name="Ecker J.R."/>
        </authorList>
    </citation>
    <scope>NUCLEOTIDE SEQUENCE [LARGE SCALE MRNA] OF 217-664</scope>
    <source>
        <strain>cv. Columbia</strain>
    </source>
</reference>
<reference key="7">
    <citation type="journal article" date="2004" name="Plant Cell">
        <title>Phosphoproteomics of the Arabidopsis plasma membrane and a new phosphorylation site database.</title>
        <authorList>
            <person name="Nuehse T.S."/>
            <person name="Stensballe A."/>
            <person name="Jensen O.N."/>
            <person name="Peck S.C."/>
        </authorList>
    </citation>
    <scope>IDENTIFICATION BY MASS SPECTROMETRY [LARGE SCALE ANALYSIS]</scope>
</reference>
<reference key="8">
    <citation type="journal article" date="2004" name="Plant J.">
        <title>Arabidopsis Yellow Stripe-Like2 (YSL2): a metal-regulated gene encoding a plasma membrane transporter of nicotianamine-metal complexes.</title>
        <authorList>
            <person name="DiDonato R.J. Jr."/>
            <person name="Roberts L.A."/>
            <person name="Sanderson T."/>
            <person name="Eisley R.B."/>
            <person name="Walker E.L."/>
        </authorList>
    </citation>
    <scope>FUNCTION</scope>
    <scope>DISRUPTION PHENOTYPE</scope>
    <scope>TISSUE SPECIFICITY</scope>
    <scope>SUBCELLULAR LOCATION</scope>
</reference>